<protein>
    <recommendedName>
        <fullName evidence="3">Agamous-like MADS-box protein AGL82</fullName>
    </recommendedName>
</protein>
<proteinExistence type="evidence at protein level"/>
<accession>Q9FIM0</accession>
<comment type="function">
    <text evidence="4">Probable transcription factor that may function in the maintenance of the proper function of the central cell in pollen tube attraction.</text>
</comment>
<comment type="subunit">
    <text evidence="2">Interacts with MEE14/CBP1.</text>
</comment>
<comment type="subcellular location">
    <subcellularLocation>
        <location evidence="1">Nucleus</location>
    </subcellularLocation>
</comment>
<evidence type="ECO:0000255" key="1">
    <source>
        <dbReference type="PROSITE-ProRule" id="PRU00251"/>
    </source>
</evidence>
<evidence type="ECO:0000269" key="2">
    <source>
    </source>
</evidence>
<evidence type="ECO:0000305" key="3"/>
<evidence type="ECO:0000305" key="4">
    <source>
    </source>
</evidence>
<evidence type="ECO:0000312" key="5">
    <source>
        <dbReference type="Araport" id="AT5G58890"/>
    </source>
</evidence>
<reference key="1">
    <citation type="journal article" date="1998" name="DNA Res.">
        <title>Structural analysis of Arabidopsis thaliana chromosome 5. VIII. Sequence features of the regions of 1,081,958 bp covered by seventeen physically assigned P1 and TAC clones.</title>
        <authorList>
            <person name="Asamizu E."/>
            <person name="Sato S."/>
            <person name="Kaneko T."/>
            <person name="Nakamura Y."/>
            <person name="Kotani H."/>
            <person name="Miyajima N."/>
            <person name="Tabata S."/>
        </authorList>
    </citation>
    <scope>NUCLEOTIDE SEQUENCE [LARGE SCALE GENOMIC DNA]</scope>
    <source>
        <strain>cv. Columbia</strain>
    </source>
</reference>
<reference key="2">
    <citation type="journal article" date="2017" name="Plant J.">
        <title>Araport11: a complete reannotation of the Arabidopsis thaliana reference genome.</title>
        <authorList>
            <person name="Cheng C.Y."/>
            <person name="Krishnakumar V."/>
            <person name="Chan A.P."/>
            <person name="Thibaud-Nissen F."/>
            <person name="Schobel S."/>
            <person name="Town C.D."/>
        </authorList>
    </citation>
    <scope>GENOME REANNOTATION</scope>
    <source>
        <strain>cv. Columbia</strain>
    </source>
</reference>
<reference key="3">
    <citation type="submission" date="2009-03" db="EMBL/GenBank/DDBJ databases">
        <title>ORF cloning and analysis of Arabidopsis transcription factor genes.</title>
        <authorList>
            <person name="Fujita M."/>
            <person name="Mizukado S."/>
            <person name="Seki M."/>
            <person name="Shinozaki K."/>
            <person name="Mitsuda N."/>
            <person name="Takiguchi Y."/>
            <person name="Takagi M."/>
        </authorList>
    </citation>
    <scope>NUCLEOTIDE SEQUENCE [LARGE SCALE GENOMIC DNA]</scope>
</reference>
<reference key="4">
    <citation type="journal article" date="2015" name="Plant Cell">
        <title>Arabidopsis CBP1 is a novel regulator of transcription initiation in central cell-mediated pollen tube guidance.</title>
        <authorList>
            <person name="Li H.J."/>
            <person name="Zhu S.S."/>
            <person name="Zhang M.X."/>
            <person name="Wang T."/>
            <person name="Liang L."/>
            <person name="Xue Y."/>
            <person name="Shi D.Q."/>
            <person name="Liu J."/>
            <person name="Yang W.C."/>
        </authorList>
    </citation>
    <scope>FUNCTION</scope>
    <scope>INTERACTION WITH ME14/CBP1</scope>
</reference>
<sequence length="294" mass="34166">MVPKVVDLQRIANDKTRITTYKKRKASLYKKAQEFSTLCGVETCLIVYGPTKATDVVISEPEIWPKDETKVRAIIRKYKDTVSTSCRKETNVETFVNDVGKGNEVVTKKRVKRENKYSSWEEKLDKCSREQLHGIFCAVDSKLNEAVTRQERSMFRVNHQAMDTPFPQNLMDQQFMPQYFHEQPQFQGFPNNFNNMGFSLISPHDGQIQMDPNLMEKWTDLALTQSLMMSKGNDGTQFMQRQEQPYYNREQVVSRSAGFNVNPFMGYQVPFNIPNWRLSGNQVENWELSGKKTI</sequence>
<feature type="chain" id="PRO_0000435416" description="Agamous-like MADS-box protein AGL82">
    <location>
        <begin position="1"/>
        <end position="294"/>
    </location>
</feature>
<feature type="domain" description="MADS-box" evidence="1">
    <location>
        <begin position="1"/>
        <end position="51"/>
    </location>
</feature>
<dbReference type="EMBL" id="AB016885">
    <property type="protein sequence ID" value="BAB09634.1"/>
    <property type="molecule type" value="Genomic_DNA"/>
</dbReference>
<dbReference type="EMBL" id="CP002688">
    <property type="protein sequence ID" value="AED97114.1"/>
    <property type="molecule type" value="Genomic_DNA"/>
</dbReference>
<dbReference type="EMBL" id="AB493798">
    <property type="protein sequence ID" value="BAH30636.1"/>
    <property type="molecule type" value="Genomic_DNA"/>
</dbReference>
<dbReference type="RefSeq" id="NP_200697.1">
    <property type="nucleotide sequence ID" value="NM_125279.1"/>
</dbReference>
<dbReference type="SMR" id="Q9FIM0"/>
<dbReference type="FunCoup" id="Q9FIM0">
    <property type="interactions" value="67"/>
</dbReference>
<dbReference type="IntAct" id="Q9FIM0">
    <property type="interactions" value="7"/>
</dbReference>
<dbReference type="STRING" id="3702.Q9FIM0"/>
<dbReference type="PaxDb" id="3702-AT5G58890.1"/>
<dbReference type="EnsemblPlants" id="AT5G58890.1">
    <property type="protein sequence ID" value="AT5G58890.1"/>
    <property type="gene ID" value="AT5G58890"/>
</dbReference>
<dbReference type="GeneID" id="836006"/>
<dbReference type="Gramene" id="AT5G58890.1">
    <property type="protein sequence ID" value="AT5G58890.1"/>
    <property type="gene ID" value="AT5G58890"/>
</dbReference>
<dbReference type="KEGG" id="ath:AT5G58890"/>
<dbReference type="Araport" id="AT5G58890"/>
<dbReference type="TAIR" id="AT5G58890">
    <property type="gene designation" value="AGL82"/>
</dbReference>
<dbReference type="eggNOG" id="KOG0014">
    <property type="taxonomic scope" value="Eukaryota"/>
</dbReference>
<dbReference type="HOGENOM" id="CLU_1016880_0_0_1"/>
<dbReference type="InParanoid" id="Q9FIM0"/>
<dbReference type="OMA" id="QYFAGHQ"/>
<dbReference type="OrthoDB" id="601557at2759"/>
<dbReference type="PhylomeDB" id="Q9FIM0"/>
<dbReference type="PRO" id="PR:Q9FIM0"/>
<dbReference type="Proteomes" id="UP000006548">
    <property type="component" value="Chromosome 5"/>
</dbReference>
<dbReference type="ExpressionAtlas" id="Q9FIM0">
    <property type="expression patterns" value="differential"/>
</dbReference>
<dbReference type="GO" id="GO:0005634">
    <property type="term" value="C:nucleus"/>
    <property type="evidence" value="ECO:0007669"/>
    <property type="project" value="UniProtKB-SubCell"/>
</dbReference>
<dbReference type="GO" id="GO:0000987">
    <property type="term" value="F:cis-regulatory region sequence-specific DNA binding"/>
    <property type="evidence" value="ECO:0007669"/>
    <property type="project" value="InterPro"/>
</dbReference>
<dbReference type="GO" id="GO:0003700">
    <property type="term" value="F:DNA-binding transcription factor activity"/>
    <property type="evidence" value="ECO:0000250"/>
    <property type="project" value="TAIR"/>
</dbReference>
<dbReference type="GO" id="GO:0000981">
    <property type="term" value="F:DNA-binding transcription factor activity, RNA polymerase II-specific"/>
    <property type="evidence" value="ECO:0007669"/>
    <property type="project" value="InterPro"/>
</dbReference>
<dbReference type="GO" id="GO:0046983">
    <property type="term" value="F:protein dimerization activity"/>
    <property type="evidence" value="ECO:0007669"/>
    <property type="project" value="InterPro"/>
</dbReference>
<dbReference type="GO" id="GO:0045944">
    <property type="term" value="P:positive regulation of transcription by RNA polymerase II"/>
    <property type="evidence" value="ECO:0007669"/>
    <property type="project" value="InterPro"/>
</dbReference>
<dbReference type="CDD" id="cd00266">
    <property type="entry name" value="MADS_SRF_like"/>
    <property type="match status" value="1"/>
</dbReference>
<dbReference type="FunFam" id="3.40.1810.10:FF:000044">
    <property type="entry name" value="AGAMOUS-like 101"/>
    <property type="match status" value="1"/>
</dbReference>
<dbReference type="Gene3D" id="3.40.1810.10">
    <property type="entry name" value="Transcription factor, MADS-box"/>
    <property type="match status" value="1"/>
</dbReference>
<dbReference type="InterPro" id="IPR050142">
    <property type="entry name" value="MADS-box/MEF2_TF"/>
</dbReference>
<dbReference type="InterPro" id="IPR033897">
    <property type="entry name" value="SRF-like_MADS-box"/>
</dbReference>
<dbReference type="InterPro" id="IPR002100">
    <property type="entry name" value="TF_MADSbox"/>
</dbReference>
<dbReference type="InterPro" id="IPR036879">
    <property type="entry name" value="TF_MADSbox_sf"/>
</dbReference>
<dbReference type="PANTHER" id="PTHR48019">
    <property type="entry name" value="SERUM RESPONSE FACTOR HOMOLOG"/>
    <property type="match status" value="1"/>
</dbReference>
<dbReference type="Pfam" id="PF00319">
    <property type="entry name" value="SRF-TF"/>
    <property type="match status" value="1"/>
</dbReference>
<dbReference type="PRINTS" id="PR00404">
    <property type="entry name" value="MADSDOMAIN"/>
</dbReference>
<dbReference type="SMART" id="SM00432">
    <property type="entry name" value="MADS"/>
    <property type="match status" value="1"/>
</dbReference>
<dbReference type="SUPFAM" id="SSF55455">
    <property type="entry name" value="SRF-like"/>
    <property type="match status" value="1"/>
</dbReference>
<dbReference type="PROSITE" id="PS50066">
    <property type="entry name" value="MADS_BOX_2"/>
    <property type="match status" value="1"/>
</dbReference>
<keyword id="KW-0238">DNA-binding</keyword>
<keyword id="KW-0539">Nucleus</keyword>
<keyword id="KW-1185">Reference proteome</keyword>
<keyword id="KW-0804">Transcription</keyword>
<keyword id="KW-0805">Transcription regulation</keyword>
<organism>
    <name type="scientific">Arabidopsis thaliana</name>
    <name type="common">Mouse-ear cress</name>
    <dbReference type="NCBI Taxonomy" id="3702"/>
    <lineage>
        <taxon>Eukaryota</taxon>
        <taxon>Viridiplantae</taxon>
        <taxon>Streptophyta</taxon>
        <taxon>Embryophyta</taxon>
        <taxon>Tracheophyta</taxon>
        <taxon>Spermatophyta</taxon>
        <taxon>Magnoliopsida</taxon>
        <taxon>eudicotyledons</taxon>
        <taxon>Gunneridae</taxon>
        <taxon>Pentapetalae</taxon>
        <taxon>rosids</taxon>
        <taxon>malvids</taxon>
        <taxon>Brassicales</taxon>
        <taxon>Brassicaceae</taxon>
        <taxon>Camelineae</taxon>
        <taxon>Arabidopsis</taxon>
    </lineage>
</organism>
<name>AGL82_ARATH</name>
<gene>
    <name evidence="3" type="primary">AGL82</name>
    <name evidence="5" type="ordered locus">At5g58890</name>
</gene>